<accession>B0BTA1</accession>
<proteinExistence type="inferred from homology"/>
<feature type="chain" id="PRO_1000192250" description="Nucleoside diphosphate kinase">
    <location>
        <begin position="1"/>
        <end position="138"/>
    </location>
</feature>
<feature type="active site" description="Pros-phosphohistidine intermediate" evidence="1">
    <location>
        <position position="116"/>
    </location>
</feature>
<feature type="binding site" evidence="1">
    <location>
        <position position="10"/>
    </location>
    <ligand>
        <name>ATP</name>
        <dbReference type="ChEBI" id="CHEBI:30616"/>
    </ligand>
</feature>
<feature type="binding site" evidence="1">
    <location>
        <position position="58"/>
    </location>
    <ligand>
        <name>ATP</name>
        <dbReference type="ChEBI" id="CHEBI:30616"/>
    </ligand>
</feature>
<feature type="binding site" evidence="1">
    <location>
        <position position="86"/>
    </location>
    <ligand>
        <name>ATP</name>
        <dbReference type="ChEBI" id="CHEBI:30616"/>
    </ligand>
</feature>
<feature type="binding site" evidence="1">
    <location>
        <position position="92"/>
    </location>
    <ligand>
        <name>ATP</name>
        <dbReference type="ChEBI" id="CHEBI:30616"/>
    </ligand>
</feature>
<feature type="binding site" evidence="1">
    <location>
        <position position="103"/>
    </location>
    <ligand>
        <name>ATP</name>
        <dbReference type="ChEBI" id="CHEBI:30616"/>
    </ligand>
</feature>
<feature type="binding site" evidence="1">
    <location>
        <position position="113"/>
    </location>
    <ligand>
        <name>ATP</name>
        <dbReference type="ChEBI" id="CHEBI:30616"/>
    </ligand>
</feature>
<evidence type="ECO:0000255" key="1">
    <source>
        <dbReference type="HAMAP-Rule" id="MF_00451"/>
    </source>
</evidence>
<organism>
    <name type="scientific">Actinobacillus pleuropneumoniae serotype 3 (strain JL03)</name>
    <dbReference type="NCBI Taxonomy" id="434271"/>
    <lineage>
        <taxon>Bacteria</taxon>
        <taxon>Pseudomonadati</taxon>
        <taxon>Pseudomonadota</taxon>
        <taxon>Gammaproteobacteria</taxon>
        <taxon>Pasteurellales</taxon>
        <taxon>Pasteurellaceae</taxon>
        <taxon>Actinobacillus</taxon>
    </lineage>
</organism>
<protein>
    <recommendedName>
        <fullName evidence="1">Nucleoside diphosphate kinase</fullName>
        <shortName evidence="1">NDK</shortName>
        <shortName evidence="1">NDP kinase</shortName>
        <ecNumber evidence="1">2.7.4.6</ecNumber>
    </recommendedName>
    <alternativeName>
        <fullName evidence="1">Nucleoside-2-P kinase</fullName>
    </alternativeName>
</protein>
<gene>
    <name evidence="1" type="primary">ndk</name>
    <name type="ordered locus">APJL_0367</name>
</gene>
<dbReference type="EC" id="2.7.4.6" evidence="1"/>
<dbReference type="EMBL" id="CP000687">
    <property type="protein sequence ID" value="ABY68958.1"/>
    <property type="molecule type" value="Genomic_DNA"/>
</dbReference>
<dbReference type="RefSeq" id="WP_005596335.1">
    <property type="nucleotide sequence ID" value="NC_010278.1"/>
</dbReference>
<dbReference type="SMR" id="B0BTA1"/>
<dbReference type="GeneID" id="48598516"/>
<dbReference type="KEGG" id="apj:APJL_0367"/>
<dbReference type="HOGENOM" id="CLU_060216_8_1_6"/>
<dbReference type="Proteomes" id="UP000008547">
    <property type="component" value="Chromosome"/>
</dbReference>
<dbReference type="GO" id="GO:0005737">
    <property type="term" value="C:cytoplasm"/>
    <property type="evidence" value="ECO:0007669"/>
    <property type="project" value="UniProtKB-SubCell"/>
</dbReference>
<dbReference type="GO" id="GO:0005524">
    <property type="term" value="F:ATP binding"/>
    <property type="evidence" value="ECO:0007669"/>
    <property type="project" value="UniProtKB-UniRule"/>
</dbReference>
<dbReference type="GO" id="GO:0046872">
    <property type="term" value="F:metal ion binding"/>
    <property type="evidence" value="ECO:0007669"/>
    <property type="project" value="UniProtKB-KW"/>
</dbReference>
<dbReference type="GO" id="GO:0004550">
    <property type="term" value="F:nucleoside diphosphate kinase activity"/>
    <property type="evidence" value="ECO:0007669"/>
    <property type="project" value="UniProtKB-UniRule"/>
</dbReference>
<dbReference type="GO" id="GO:0006241">
    <property type="term" value="P:CTP biosynthetic process"/>
    <property type="evidence" value="ECO:0007669"/>
    <property type="project" value="UniProtKB-UniRule"/>
</dbReference>
<dbReference type="GO" id="GO:0006183">
    <property type="term" value="P:GTP biosynthetic process"/>
    <property type="evidence" value="ECO:0007669"/>
    <property type="project" value="UniProtKB-UniRule"/>
</dbReference>
<dbReference type="GO" id="GO:0006228">
    <property type="term" value="P:UTP biosynthetic process"/>
    <property type="evidence" value="ECO:0007669"/>
    <property type="project" value="UniProtKB-UniRule"/>
</dbReference>
<dbReference type="CDD" id="cd04413">
    <property type="entry name" value="NDPk_I"/>
    <property type="match status" value="1"/>
</dbReference>
<dbReference type="FunFam" id="3.30.70.141:FF:000003">
    <property type="entry name" value="Nucleoside diphosphate kinase"/>
    <property type="match status" value="1"/>
</dbReference>
<dbReference type="Gene3D" id="3.30.70.141">
    <property type="entry name" value="Nucleoside diphosphate kinase-like domain"/>
    <property type="match status" value="1"/>
</dbReference>
<dbReference type="HAMAP" id="MF_00451">
    <property type="entry name" value="NDP_kinase"/>
    <property type="match status" value="1"/>
</dbReference>
<dbReference type="InterPro" id="IPR034907">
    <property type="entry name" value="NDK-like_dom"/>
</dbReference>
<dbReference type="InterPro" id="IPR036850">
    <property type="entry name" value="NDK-like_dom_sf"/>
</dbReference>
<dbReference type="InterPro" id="IPR001564">
    <property type="entry name" value="Nucleoside_diP_kinase"/>
</dbReference>
<dbReference type="InterPro" id="IPR023005">
    <property type="entry name" value="Nucleoside_diP_kinase_AS"/>
</dbReference>
<dbReference type="NCBIfam" id="NF001908">
    <property type="entry name" value="PRK00668.1"/>
    <property type="match status" value="1"/>
</dbReference>
<dbReference type="PANTHER" id="PTHR46161">
    <property type="entry name" value="NUCLEOSIDE DIPHOSPHATE KINASE"/>
    <property type="match status" value="1"/>
</dbReference>
<dbReference type="PANTHER" id="PTHR46161:SF3">
    <property type="entry name" value="NUCLEOSIDE DIPHOSPHATE KINASE DDB_G0292928-RELATED"/>
    <property type="match status" value="1"/>
</dbReference>
<dbReference type="Pfam" id="PF00334">
    <property type="entry name" value="NDK"/>
    <property type="match status" value="1"/>
</dbReference>
<dbReference type="PRINTS" id="PR01243">
    <property type="entry name" value="NUCDPKINASE"/>
</dbReference>
<dbReference type="SMART" id="SM00562">
    <property type="entry name" value="NDK"/>
    <property type="match status" value="1"/>
</dbReference>
<dbReference type="SUPFAM" id="SSF54919">
    <property type="entry name" value="Nucleoside diphosphate kinase, NDK"/>
    <property type="match status" value="1"/>
</dbReference>
<dbReference type="PROSITE" id="PS00469">
    <property type="entry name" value="NDPK"/>
    <property type="match status" value="1"/>
</dbReference>
<dbReference type="PROSITE" id="PS51374">
    <property type="entry name" value="NDPK_LIKE"/>
    <property type="match status" value="1"/>
</dbReference>
<name>NDK_ACTPJ</name>
<reference key="1">
    <citation type="journal article" date="2008" name="PLoS ONE">
        <title>Genome biology of Actinobacillus pleuropneumoniae JL03, an isolate of serotype 3 prevalent in China.</title>
        <authorList>
            <person name="Xu Z."/>
            <person name="Zhou Y."/>
            <person name="Li L."/>
            <person name="Zhou R."/>
            <person name="Xiao S."/>
            <person name="Wan Y."/>
            <person name="Zhang S."/>
            <person name="Wang K."/>
            <person name="Li W."/>
            <person name="Li L."/>
            <person name="Jin H."/>
            <person name="Kang M."/>
            <person name="Dalai B."/>
            <person name="Li T."/>
            <person name="Liu L."/>
            <person name="Cheng Y."/>
            <person name="Zhang L."/>
            <person name="Xu T."/>
            <person name="Zheng H."/>
            <person name="Pu S."/>
            <person name="Wang B."/>
            <person name="Gu W."/>
            <person name="Zhang X.L."/>
            <person name="Zhu G.-F."/>
            <person name="Wang S."/>
            <person name="Zhao G.-P."/>
            <person name="Chen H."/>
        </authorList>
    </citation>
    <scope>NUCLEOTIDE SEQUENCE [LARGE SCALE GENOMIC DNA]</scope>
    <source>
        <strain>JL03</strain>
    </source>
</reference>
<comment type="function">
    <text evidence="1">Major role in the synthesis of nucleoside triphosphates other than ATP. The ATP gamma phosphate is transferred to the NDP beta phosphate via a ping-pong mechanism, using a phosphorylated active-site intermediate.</text>
</comment>
<comment type="catalytic activity">
    <reaction evidence="1">
        <text>a 2'-deoxyribonucleoside 5'-diphosphate + ATP = a 2'-deoxyribonucleoside 5'-triphosphate + ADP</text>
        <dbReference type="Rhea" id="RHEA:44640"/>
        <dbReference type="ChEBI" id="CHEBI:30616"/>
        <dbReference type="ChEBI" id="CHEBI:61560"/>
        <dbReference type="ChEBI" id="CHEBI:73316"/>
        <dbReference type="ChEBI" id="CHEBI:456216"/>
        <dbReference type="EC" id="2.7.4.6"/>
    </reaction>
</comment>
<comment type="catalytic activity">
    <reaction evidence="1">
        <text>a ribonucleoside 5'-diphosphate + ATP = a ribonucleoside 5'-triphosphate + ADP</text>
        <dbReference type="Rhea" id="RHEA:18113"/>
        <dbReference type="ChEBI" id="CHEBI:30616"/>
        <dbReference type="ChEBI" id="CHEBI:57930"/>
        <dbReference type="ChEBI" id="CHEBI:61557"/>
        <dbReference type="ChEBI" id="CHEBI:456216"/>
        <dbReference type="EC" id="2.7.4.6"/>
    </reaction>
</comment>
<comment type="cofactor">
    <cofactor evidence="1">
        <name>Mg(2+)</name>
        <dbReference type="ChEBI" id="CHEBI:18420"/>
    </cofactor>
</comment>
<comment type="subunit">
    <text evidence="1">Homotetramer.</text>
</comment>
<comment type="subcellular location">
    <subcellularLocation>
        <location evidence="1">Cytoplasm</location>
    </subcellularLocation>
</comment>
<comment type="similarity">
    <text evidence="1">Belongs to the NDK family.</text>
</comment>
<sequence>MIQQTLCLIKPDATQRNLIGKILSHLEEAGLTIKALKKVQLNQEQAEGFYAEHQGKEFFAPLVEFMISAPIVAVVLEGENAISHYRELMGATNPEQRKAGTIRALYAISGRENSVHGSDSEQSAKREIAYFFTPNEIL</sequence>
<keyword id="KW-0067">ATP-binding</keyword>
<keyword id="KW-0963">Cytoplasm</keyword>
<keyword id="KW-0418">Kinase</keyword>
<keyword id="KW-0460">Magnesium</keyword>
<keyword id="KW-0479">Metal-binding</keyword>
<keyword id="KW-0546">Nucleotide metabolism</keyword>
<keyword id="KW-0547">Nucleotide-binding</keyword>
<keyword id="KW-0597">Phosphoprotein</keyword>
<keyword id="KW-0808">Transferase</keyword>